<protein>
    <recommendedName>
        <fullName evidence="1">Sulfate adenylyltransferase subunit 2</fullName>
        <ecNumber evidence="1">2.7.7.4</ecNumber>
    </recommendedName>
    <alternativeName>
        <fullName evidence="1">ATP-sulfurylase small subunit</fullName>
    </alternativeName>
    <alternativeName>
        <fullName evidence="1">Sulfate adenylate transferase</fullName>
        <shortName evidence="1">SAT</shortName>
    </alternativeName>
</protein>
<gene>
    <name evidence="1" type="primary">cysD</name>
    <name type="ordered locus">Mmc1_1017</name>
</gene>
<proteinExistence type="inferred from homology"/>
<comment type="function">
    <text evidence="1">With CysN forms the ATP sulfurylase (ATPS) that catalyzes the adenylation of sulfate producing adenosine 5'-phosphosulfate (APS) and diphosphate, the first enzymatic step in sulfur assimilation pathway. APS synthesis involves the formation of a high-energy phosphoric-sulfuric acid anhydride bond driven by GTP hydrolysis by CysN coupled to ATP hydrolysis by CysD.</text>
</comment>
<comment type="catalytic activity">
    <reaction evidence="1">
        <text>sulfate + ATP + H(+) = adenosine 5'-phosphosulfate + diphosphate</text>
        <dbReference type="Rhea" id="RHEA:18133"/>
        <dbReference type="ChEBI" id="CHEBI:15378"/>
        <dbReference type="ChEBI" id="CHEBI:16189"/>
        <dbReference type="ChEBI" id="CHEBI:30616"/>
        <dbReference type="ChEBI" id="CHEBI:33019"/>
        <dbReference type="ChEBI" id="CHEBI:58243"/>
        <dbReference type="EC" id="2.7.7.4"/>
    </reaction>
</comment>
<comment type="pathway">
    <text evidence="1">Sulfur metabolism; hydrogen sulfide biosynthesis; sulfite from sulfate: step 1/3.</text>
</comment>
<comment type="subunit">
    <text evidence="1">Heterodimer composed of CysD, the smaller subunit, and CysN.</text>
</comment>
<comment type="similarity">
    <text evidence="1">Belongs to the PAPS reductase family. CysD subfamily.</text>
</comment>
<accession>A0L6E2</accession>
<organism>
    <name type="scientific">Magnetococcus marinus (strain ATCC BAA-1437 / JCM 17883 / MC-1)</name>
    <dbReference type="NCBI Taxonomy" id="156889"/>
    <lineage>
        <taxon>Bacteria</taxon>
        <taxon>Pseudomonadati</taxon>
        <taxon>Pseudomonadota</taxon>
        <taxon>Alphaproteobacteria</taxon>
        <taxon>Magnetococcales</taxon>
        <taxon>Magnetococcaceae</taxon>
        <taxon>Magnetococcus</taxon>
    </lineage>
</organism>
<reference key="1">
    <citation type="journal article" date="2009" name="Appl. Environ. Microbiol.">
        <title>Complete genome sequence of the chemolithoautotrophic marine magnetotactic coccus strain MC-1.</title>
        <authorList>
            <person name="Schubbe S."/>
            <person name="Williams T.J."/>
            <person name="Xie G."/>
            <person name="Kiss H.E."/>
            <person name="Brettin T.S."/>
            <person name="Martinez D."/>
            <person name="Ross C.A."/>
            <person name="Schuler D."/>
            <person name="Cox B.L."/>
            <person name="Nealson K.H."/>
            <person name="Bazylinski D.A."/>
        </authorList>
    </citation>
    <scope>NUCLEOTIDE SEQUENCE [LARGE SCALE GENOMIC DNA]</scope>
    <source>
        <strain>ATCC BAA-1437 / JCM 17883 / MC-1</strain>
    </source>
</reference>
<name>CYSD_MAGMM</name>
<sequence>MTMKTHLQRLEAESIHIMREVVAQFRKPVMLYSIGKDSSVMLHLALKAFYPGKPPFPLLHVDTTWKFREMIVFRDQRVKALGLDLRVHINQEGIAQGITPFNQSASIYTDIMKTQSLKQALEQGGFDAAFGGARRDEEKSRAKERIFSFRTPNHRWDPKNQRPELWNLYNGRIAPGESIRVFPLSNWTELDIWQYIHQEQIPVVPLYFAQPRPVVVRHGALIMVDDGRMPLLPGEEPSLRSVRFRTLGCYPLTGAVESTTTDVAGIIGEMLVAHRSEREGRVIDHDGGASMEEKKQEGYF</sequence>
<dbReference type="EC" id="2.7.7.4" evidence="1"/>
<dbReference type="EMBL" id="CP000471">
    <property type="protein sequence ID" value="ABK43535.1"/>
    <property type="molecule type" value="Genomic_DNA"/>
</dbReference>
<dbReference type="RefSeq" id="WP_011712692.1">
    <property type="nucleotide sequence ID" value="NC_008576.1"/>
</dbReference>
<dbReference type="SMR" id="A0L6E2"/>
<dbReference type="STRING" id="156889.Mmc1_1017"/>
<dbReference type="KEGG" id="mgm:Mmc1_1017"/>
<dbReference type="eggNOG" id="COG0175">
    <property type="taxonomic scope" value="Bacteria"/>
</dbReference>
<dbReference type="HOGENOM" id="CLU_043026_0_0_5"/>
<dbReference type="OrthoDB" id="9772604at2"/>
<dbReference type="UniPathway" id="UPA00140">
    <property type="reaction ID" value="UER00204"/>
</dbReference>
<dbReference type="Proteomes" id="UP000002586">
    <property type="component" value="Chromosome"/>
</dbReference>
<dbReference type="GO" id="GO:0005524">
    <property type="term" value="F:ATP binding"/>
    <property type="evidence" value="ECO:0007669"/>
    <property type="project" value="UniProtKB-KW"/>
</dbReference>
<dbReference type="GO" id="GO:0004781">
    <property type="term" value="F:sulfate adenylyltransferase (ATP) activity"/>
    <property type="evidence" value="ECO:0007669"/>
    <property type="project" value="UniProtKB-UniRule"/>
</dbReference>
<dbReference type="GO" id="GO:0070814">
    <property type="term" value="P:hydrogen sulfide biosynthetic process"/>
    <property type="evidence" value="ECO:0007669"/>
    <property type="project" value="UniProtKB-UniRule"/>
</dbReference>
<dbReference type="GO" id="GO:0000103">
    <property type="term" value="P:sulfate assimilation"/>
    <property type="evidence" value="ECO:0007669"/>
    <property type="project" value="UniProtKB-UniRule"/>
</dbReference>
<dbReference type="CDD" id="cd23946">
    <property type="entry name" value="Sulfate_adenylyltransferase_2"/>
    <property type="match status" value="1"/>
</dbReference>
<dbReference type="FunFam" id="3.40.50.620:FF:000002">
    <property type="entry name" value="Sulfate adenylyltransferase subunit 2"/>
    <property type="match status" value="1"/>
</dbReference>
<dbReference type="Gene3D" id="3.40.50.620">
    <property type="entry name" value="HUPs"/>
    <property type="match status" value="1"/>
</dbReference>
<dbReference type="HAMAP" id="MF_00064">
    <property type="entry name" value="Sulf_adenylyltr_sub2"/>
    <property type="match status" value="1"/>
</dbReference>
<dbReference type="InterPro" id="IPR002500">
    <property type="entry name" value="PAPS_reduct_dom"/>
</dbReference>
<dbReference type="InterPro" id="IPR014729">
    <property type="entry name" value="Rossmann-like_a/b/a_fold"/>
</dbReference>
<dbReference type="InterPro" id="IPR011784">
    <property type="entry name" value="SO4_adenylTrfase_ssu"/>
</dbReference>
<dbReference type="InterPro" id="IPR050128">
    <property type="entry name" value="Sulfate_adenylyltrnsfr_sub2"/>
</dbReference>
<dbReference type="NCBIfam" id="TIGR02039">
    <property type="entry name" value="CysD"/>
    <property type="match status" value="1"/>
</dbReference>
<dbReference type="NCBIfam" id="NF003587">
    <property type="entry name" value="PRK05253.1"/>
    <property type="match status" value="1"/>
</dbReference>
<dbReference type="NCBIfam" id="NF009214">
    <property type="entry name" value="PRK12563.1"/>
    <property type="match status" value="1"/>
</dbReference>
<dbReference type="PANTHER" id="PTHR43196">
    <property type="entry name" value="SULFATE ADENYLYLTRANSFERASE SUBUNIT 2"/>
    <property type="match status" value="1"/>
</dbReference>
<dbReference type="PANTHER" id="PTHR43196:SF1">
    <property type="entry name" value="SULFATE ADENYLYLTRANSFERASE SUBUNIT 2"/>
    <property type="match status" value="1"/>
</dbReference>
<dbReference type="Pfam" id="PF01507">
    <property type="entry name" value="PAPS_reduct"/>
    <property type="match status" value="1"/>
</dbReference>
<dbReference type="PIRSF" id="PIRSF002936">
    <property type="entry name" value="CysDAde_trans"/>
    <property type="match status" value="1"/>
</dbReference>
<dbReference type="SUPFAM" id="SSF52402">
    <property type="entry name" value="Adenine nucleotide alpha hydrolases-like"/>
    <property type="match status" value="1"/>
</dbReference>
<evidence type="ECO:0000255" key="1">
    <source>
        <dbReference type="HAMAP-Rule" id="MF_00064"/>
    </source>
</evidence>
<feature type="chain" id="PRO_0000340198" description="Sulfate adenylyltransferase subunit 2">
    <location>
        <begin position="1"/>
        <end position="300"/>
    </location>
</feature>
<keyword id="KW-0067">ATP-binding</keyword>
<keyword id="KW-0547">Nucleotide-binding</keyword>
<keyword id="KW-0548">Nucleotidyltransferase</keyword>
<keyword id="KW-1185">Reference proteome</keyword>
<keyword id="KW-0808">Transferase</keyword>